<comment type="function">
    <text evidence="1">Produces ATP from ADP in the presence of a proton gradient across the membrane. The gamma chain is believed to be important in regulating ATPase activity and the flow of protons through the CF(0) complex.</text>
</comment>
<comment type="subunit">
    <text evidence="1">F-type ATPases have 2 components, CF(1) - the catalytic core - and CF(0) - the membrane proton channel. CF(1) has five subunits: alpha(3), beta(3), gamma(1), delta(1), epsilon(1). CF(0) has three main subunits: a, b and c.</text>
</comment>
<comment type="subcellular location">
    <subcellularLocation>
        <location evidence="1">Cell inner membrane</location>
        <topology evidence="1">Peripheral membrane protein</topology>
    </subcellularLocation>
</comment>
<comment type="similarity">
    <text evidence="1">Belongs to the ATPase gamma chain family.</text>
</comment>
<feature type="chain" id="PRO_1000213048" description="ATP synthase gamma chain">
    <location>
        <begin position="1"/>
        <end position="286"/>
    </location>
</feature>
<sequence>MASGKEIRTKIGSIKNTQKITSAMEMVAASKMRKAQDRMEVGKPYARRMREVVGHIAAGNLEYQHLYITEREVKRVGYIVVSTDRGLCGGLNVNLFKAVLRHSKEWADKGIETDFCMVGAKGTAFFKSVGANIVASLRDIGEQPSITSLIGSVKVMLDAFADGKIDRLYVCSNDFVNTMTQTPKVERLLPLKPEDGAIHKRSWDYLYEPDAKELLDGLMVRYIESQVFQAVVENGACEQAARMIAMKSATDNAGNLINELQLAYNKARQAAITQELSEIVGGAAAV</sequence>
<proteinExistence type="inferred from homology"/>
<reference key="1">
    <citation type="journal article" date="2009" name="PLoS ONE">
        <title>The complete genome of Teredinibacter turnerae T7901: an intracellular endosymbiont of marine wood-boring bivalves (shipworms).</title>
        <authorList>
            <person name="Yang J.C."/>
            <person name="Madupu R."/>
            <person name="Durkin A.S."/>
            <person name="Ekborg N.A."/>
            <person name="Pedamallu C.S."/>
            <person name="Hostetler J.B."/>
            <person name="Radune D."/>
            <person name="Toms B.S."/>
            <person name="Henrissat B."/>
            <person name="Coutinho P.M."/>
            <person name="Schwarz S."/>
            <person name="Field L."/>
            <person name="Trindade-Silva A.E."/>
            <person name="Soares C.A.G."/>
            <person name="Elshahawi S."/>
            <person name="Hanora A."/>
            <person name="Schmidt E.W."/>
            <person name="Haygood M.G."/>
            <person name="Posfai J."/>
            <person name="Benner J."/>
            <person name="Madinger C."/>
            <person name="Nove J."/>
            <person name="Anton B."/>
            <person name="Chaudhary K."/>
            <person name="Foster J."/>
            <person name="Holman A."/>
            <person name="Kumar S."/>
            <person name="Lessard P.A."/>
            <person name="Luyten Y.A."/>
            <person name="Slatko B."/>
            <person name="Wood N."/>
            <person name="Wu B."/>
            <person name="Teplitski M."/>
            <person name="Mougous J.D."/>
            <person name="Ward N."/>
            <person name="Eisen J.A."/>
            <person name="Badger J.H."/>
            <person name="Distel D.L."/>
        </authorList>
    </citation>
    <scope>NUCLEOTIDE SEQUENCE [LARGE SCALE GENOMIC DNA]</scope>
    <source>
        <strain>ATCC 39867 / T7901</strain>
    </source>
</reference>
<protein>
    <recommendedName>
        <fullName evidence="1">ATP synthase gamma chain</fullName>
    </recommendedName>
    <alternativeName>
        <fullName evidence="1">ATP synthase F1 sector gamma subunit</fullName>
    </alternativeName>
    <alternativeName>
        <fullName evidence="1">F-ATPase gamma subunit</fullName>
    </alternativeName>
</protein>
<organism>
    <name type="scientific">Teredinibacter turnerae (strain ATCC 39867 / T7901)</name>
    <dbReference type="NCBI Taxonomy" id="377629"/>
    <lineage>
        <taxon>Bacteria</taxon>
        <taxon>Pseudomonadati</taxon>
        <taxon>Pseudomonadota</taxon>
        <taxon>Gammaproteobacteria</taxon>
        <taxon>Cellvibrionales</taxon>
        <taxon>Cellvibrionaceae</taxon>
        <taxon>Teredinibacter</taxon>
    </lineage>
</organism>
<accession>C5BKJ6</accession>
<keyword id="KW-0066">ATP synthesis</keyword>
<keyword id="KW-0997">Cell inner membrane</keyword>
<keyword id="KW-1003">Cell membrane</keyword>
<keyword id="KW-0139">CF(1)</keyword>
<keyword id="KW-0375">Hydrogen ion transport</keyword>
<keyword id="KW-0406">Ion transport</keyword>
<keyword id="KW-0472">Membrane</keyword>
<keyword id="KW-1185">Reference proteome</keyword>
<keyword id="KW-0813">Transport</keyword>
<dbReference type="EMBL" id="CP001614">
    <property type="protein sequence ID" value="ACR14152.1"/>
    <property type="molecule type" value="Genomic_DNA"/>
</dbReference>
<dbReference type="RefSeq" id="WP_015820268.1">
    <property type="nucleotide sequence ID" value="NC_012997.1"/>
</dbReference>
<dbReference type="SMR" id="C5BKJ6"/>
<dbReference type="STRING" id="377629.TERTU_4717"/>
<dbReference type="KEGG" id="ttu:TERTU_4717"/>
<dbReference type="eggNOG" id="COG0224">
    <property type="taxonomic scope" value="Bacteria"/>
</dbReference>
<dbReference type="HOGENOM" id="CLU_050669_0_1_6"/>
<dbReference type="OrthoDB" id="9812769at2"/>
<dbReference type="Proteomes" id="UP000009080">
    <property type="component" value="Chromosome"/>
</dbReference>
<dbReference type="GO" id="GO:0005886">
    <property type="term" value="C:plasma membrane"/>
    <property type="evidence" value="ECO:0007669"/>
    <property type="project" value="UniProtKB-SubCell"/>
</dbReference>
<dbReference type="GO" id="GO:0045259">
    <property type="term" value="C:proton-transporting ATP synthase complex"/>
    <property type="evidence" value="ECO:0007669"/>
    <property type="project" value="UniProtKB-KW"/>
</dbReference>
<dbReference type="GO" id="GO:0005524">
    <property type="term" value="F:ATP binding"/>
    <property type="evidence" value="ECO:0007669"/>
    <property type="project" value="UniProtKB-UniRule"/>
</dbReference>
<dbReference type="GO" id="GO:0046933">
    <property type="term" value="F:proton-transporting ATP synthase activity, rotational mechanism"/>
    <property type="evidence" value="ECO:0007669"/>
    <property type="project" value="UniProtKB-UniRule"/>
</dbReference>
<dbReference type="GO" id="GO:0042777">
    <property type="term" value="P:proton motive force-driven plasma membrane ATP synthesis"/>
    <property type="evidence" value="ECO:0007669"/>
    <property type="project" value="UniProtKB-UniRule"/>
</dbReference>
<dbReference type="CDD" id="cd12151">
    <property type="entry name" value="F1-ATPase_gamma"/>
    <property type="match status" value="1"/>
</dbReference>
<dbReference type="FunFam" id="1.10.287.80:FF:000005">
    <property type="entry name" value="ATP synthase gamma chain"/>
    <property type="match status" value="1"/>
</dbReference>
<dbReference type="Gene3D" id="3.40.1380.10">
    <property type="match status" value="1"/>
</dbReference>
<dbReference type="Gene3D" id="1.10.287.80">
    <property type="entry name" value="ATP synthase, gamma subunit, helix hairpin domain"/>
    <property type="match status" value="2"/>
</dbReference>
<dbReference type="HAMAP" id="MF_00815">
    <property type="entry name" value="ATP_synth_gamma_bact"/>
    <property type="match status" value="1"/>
</dbReference>
<dbReference type="InterPro" id="IPR035968">
    <property type="entry name" value="ATP_synth_F1_ATPase_gsu"/>
</dbReference>
<dbReference type="InterPro" id="IPR000131">
    <property type="entry name" value="ATP_synth_F1_gsu"/>
</dbReference>
<dbReference type="InterPro" id="IPR023632">
    <property type="entry name" value="ATP_synth_F1_gsu_CS"/>
</dbReference>
<dbReference type="NCBIfam" id="TIGR01146">
    <property type="entry name" value="ATPsyn_F1gamma"/>
    <property type="match status" value="1"/>
</dbReference>
<dbReference type="NCBIfam" id="NF004144">
    <property type="entry name" value="PRK05621.1-1"/>
    <property type="match status" value="1"/>
</dbReference>
<dbReference type="PANTHER" id="PTHR11693">
    <property type="entry name" value="ATP SYNTHASE GAMMA CHAIN"/>
    <property type="match status" value="1"/>
</dbReference>
<dbReference type="PANTHER" id="PTHR11693:SF22">
    <property type="entry name" value="ATP SYNTHASE SUBUNIT GAMMA, MITOCHONDRIAL"/>
    <property type="match status" value="1"/>
</dbReference>
<dbReference type="Pfam" id="PF00231">
    <property type="entry name" value="ATP-synt"/>
    <property type="match status" value="1"/>
</dbReference>
<dbReference type="PRINTS" id="PR00126">
    <property type="entry name" value="ATPASEGAMMA"/>
</dbReference>
<dbReference type="SUPFAM" id="SSF52943">
    <property type="entry name" value="ATP synthase (F1-ATPase), gamma subunit"/>
    <property type="match status" value="1"/>
</dbReference>
<dbReference type="PROSITE" id="PS00153">
    <property type="entry name" value="ATPASE_GAMMA"/>
    <property type="match status" value="1"/>
</dbReference>
<gene>
    <name evidence="1" type="primary">atpG</name>
    <name type="ordered locus">TERTU_4717</name>
</gene>
<evidence type="ECO:0000255" key="1">
    <source>
        <dbReference type="HAMAP-Rule" id="MF_00815"/>
    </source>
</evidence>
<name>ATPG_TERTT</name>